<keyword id="KW-0878">Amphibian defense peptide</keyword>
<keyword id="KW-0044">Antibiotic</keyword>
<keyword id="KW-0929">Antimicrobial</keyword>
<keyword id="KW-0165">Cleavage on pair of basic residues</keyword>
<keyword id="KW-0903">Direct protein sequencing</keyword>
<keyword id="KW-0964">Secreted</keyword>
<keyword id="KW-0732">Signal</keyword>
<feature type="signal peptide" evidence="2">
    <location>
        <begin position="1"/>
        <end position="22"/>
    </location>
</feature>
<feature type="propeptide" id="PRO_0000371449" evidence="4">
    <location>
        <begin position="23"/>
        <end position="49"/>
    </location>
</feature>
<feature type="peptide" id="PRO_0000371450" description="Raniseptin-7" evidence="4">
    <location>
        <begin position="52"/>
        <end position="80"/>
    </location>
</feature>
<feature type="region of interest" description="Disordered" evidence="3">
    <location>
        <begin position="27"/>
        <end position="46"/>
    </location>
</feature>
<feature type="compositionally biased region" description="Acidic residues" evidence="3">
    <location>
        <begin position="30"/>
        <end position="44"/>
    </location>
</feature>
<protein>
    <recommendedName>
        <fullName evidence="5">Raniseptin-7</fullName>
        <shortName evidence="5">Rsp-7</shortName>
    </recommendedName>
</protein>
<organism>
    <name type="scientific">Boana raniceps</name>
    <name type="common">Chaco tree frog</name>
    <name type="synonym">Hyla roeschmanni</name>
    <dbReference type="NCBI Taxonomy" id="192750"/>
    <lineage>
        <taxon>Eukaryota</taxon>
        <taxon>Metazoa</taxon>
        <taxon>Chordata</taxon>
        <taxon>Craniata</taxon>
        <taxon>Vertebrata</taxon>
        <taxon>Euteleostomi</taxon>
        <taxon>Amphibia</taxon>
        <taxon>Batrachia</taxon>
        <taxon>Anura</taxon>
        <taxon>Neobatrachia</taxon>
        <taxon>Hyloidea</taxon>
        <taxon>Hylidae</taxon>
        <taxon>Hylinae</taxon>
        <taxon>Cophomantini</taxon>
        <taxon>Boana</taxon>
    </lineage>
</organism>
<evidence type="ECO:0000250" key="1">
    <source>
        <dbReference type="UniProtKB" id="P86037"/>
    </source>
</evidence>
<evidence type="ECO:0000255" key="2"/>
<evidence type="ECO:0000256" key="3">
    <source>
        <dbReference type="SAM" id="MobiDB-lite"/>
    </source>
</evidence>
<evidence type="ECO:0000269" key="4">
    <source>
    </source>
</evidence>
<evidence type="ECO:0000303" key="5">
    <source>
    </source>
</evidence>
<evidence type="ECO:0000305" key="6"/>
<accession>P86040</accession>
<reference evidence="6" key="1">
    <citation type="journal article" date="2008" name="Biochem. Biophys. Res. Commun.">
        <title>Post-secretory events alter the peptide content of the skin secretion of Hypsiboas raniceps.</title>
        <authorList>
            <person name="Magalhaes B.S."/>
            <person name="Melo J.A.T."/>
            <person name="Leite J.R.S.A."/>
            <person name="Silva L.P."/>
            <person name="Prates M.V."/>
            <person name="Vinecky F."/>
            <person name="Barbosa E.A."/>
            <person name="Verly R.M."/>
            <person name="Mehta A."/>
            <person name="Nicoli J.R."/>
            <person name="Bemquerer M.P."/>
            <person name="Andrade A.C."/>
            <person name="Bloch C. Jr."/>
        </authorList>
    </citation>
    <scope>NUCLEOTIDE SEQUENCE [MRNA]</scope>
    <scope>PROTEIN SEQUENCE OF 52-80</scope>
    <scope>SUBCELLULAR LOCATION</scope>
    <scope>TISSUE SPECIFICITY</scope>
    <source>
        <tissue evidence="4">Skin</tissue>
        <tissue evidence="4">Skin secretion</tissue>
    </source>
</reference>
<comment type="function">
    <text evidence="1">Has antibacterial activity.</text>
</comment>
<comment type="subcellular location">
    <subcellularLocation>
        <location evidence="4">Secreted</location>
    </subcellularLocation>
</comment>
<comment type="tissue specificity">
    <text evidence="4">Expressed by the skin glands.</text>
</comment>
<comment type="similarity">
    <text evidence="2">Belongs to the frog skin active peptide (FSAP) family. Dermaseptin subfamily.</text>
</comment>
<dbReference type="GO" id="GO:0005576">
    <property type="term" value="C:extracellular region"/>
    <property type="evidence" value="ECO:0007669"/>
    <property type="project" value="UniProtKB-SubCell"/>
</dbReference>
<dbReference type="GO" id="GO:0042742">
    <property type="term" value="P:defense response to bacterium"/>
    <property type="evidence" value="ECO:0007669"/>
    <property type="project" value="UniProtKB-KW"/>
</dbReference>
<dbReference type="InterPro" id="IPR004275">
    <property type="entry name" value="Frog_antimicrobial_propeptide"/>
</dbReference>
<dbReference type="InterPro" id="IPR016322">
    <property type="entry name" value="FSAP"/>
</dbReference>
<dbReference type="Pfam" id="PF03032">
    <property type="entry name" value="FSAP_sig_propep"/>
    <property type="match status" value="1"/>
</dbReference>
<dbReference type="PIRSF" id="PIRSF001822">
    <property type="entry name" value="Dermaseptin_precursor"/>
    <property type="match status" value="1"/>
</dbReference>
<proteinExistence type="evidence at protein level"/>
<name>RNSP7_BOARA</name>
<sequence>MAFLKKSLFLVLFLGIVSLSICEEEKREGEEEEKQEEENEELSEEELRERRALLDKLKSLGKVVGKVALGVAQHYLNPQQ</sequence>